<organism>
    <name type="scientific">Serratia proteamaculans (strain 568)</name>
    <dbReference type="NCBI Taxonomy" id="399741"/>
    <lineage>
        <taxon>Bacteria</taxon>
        <taxon>Pseudomonadati</taxon>
        <taxon>Pseudomonadota</taxon>
        <taxon>Gammaproteobacteria</taxon>
        <taxon>Enterobacterales</taxon>
        <taxon>Yersiniaceae</taxon>
        <taxon>Serratia</taxon>
    </lineage>
</organism>
<gene>
    <name evidence="1" type="primary">hisA</name>
    <name type="ordered locus">Spro_1611</name>
</gene>
<reference key="1">
    <citation type="submission" date="2007-09" db="EMBL/GenBank/DDBJ databases">
        <title>Complete sequence of chromosome of Serratia proteamaculans 568.</title>
        <authorList>
            <consortium name="US DOE Joint Genome Institute"/>
            <person name="Copeland A."/>
            <person name="Lucas S."/>
            <person name="Lapidus A."/>
            <person name="Barry K."/>
            <person name="Glavina del Rio T."/>
            <person name="Dalin E."/>
            <person name="Tice H."/>
            <person name="Pitluck S."/>
            <person name="Chain P."/>
            <person name="Malfatti S."/>
            <person name="Shin M."/>
            <person name="Vergez L."/>
            <person name="Schmutz J."/>
            <person name="Larimer F."/>
            <person name="Land M."/>
            <person name="Hauser L."/>
            <person name="Kyrpides N."/>
            <person name="Kim E."/>
            <person name="Taghavi S."/>
            <person name="Newman L."/>
            <person name="Vangronsveld J."/>
            <person name="van der Lelie D."/>
            <person name="Richardson P."/>
        </authorList>
    </citation>
    <scope>NUCLEOTIDE SEQUENCE [LARGE SCALE GENOMIC DNA]</scope>
    <source>
        <strain>568</strain>
    </source>
</reference>
<sequence length="245" mass="26413">MIIPALDLIDGNVVRLHQGDYGQQRDYGNDPLLRLQDYQQQGAQVLHLVDLTGAKDPTARQIPLLRKLLAGVNVPVQVGGGIRNEQDVAALLEAGATRVVIGSTAVKQPQLVQGWFERYGADAMVLALDVRIDADGTKRVAISGWQENSDATLEQVVEQFLPYGLKHVLCTDISRDGTLAGSNVALYQEISQRYPQIAFQASGGIGNLDDIAQLRGSGVEGVIVGRALLEGKFSVEEAIACWQNG</sequence>
<accession>A8GC75</accession>
<feature type="chain" id="PRO_1000063230" description="1-(5-phosphoribosyl)-5-[(5-phosphoribosylamino)methylideneamino] imidazole-4-carboxamide isomerase">
    <location>
        <begin position="1"/>
        <end position="245"/>
    </location>
</feature>
<feature type="active site" description="Proton acceptor" evidence="1">
    <location>
        <position position="7"/>
    </location>
</feature>
<feature type="active site" description="Proton donor" evidence="1">
    <location>
        <position position="129"/>
    </location>
</feature>
<evidence type="ECO:0000255" key="1">
    <source>
        <dbReference type="HAMAP-Rule" id="MF_01014"/>
    </source>
</evidence>
<protein>
    <recommendedName>
        <fullName evidence="1">1-(5-phosphoribosyl)-5-[(5-phosphoribosylamino)methylideneamino] imidazole-4-carboxamide isomerase</fullName>
        <ecNumber evidence="1">5.3.1.16</ecNumber>
    </recommendedName>
    <alternativeName>
        <fullName evidence="1">Phosphoribosylformimino-5-aminoimidazole carboxamide ribotide isomerase</fullName>
    </alternativeName>
</protein>
<proteinExistence type="inferred from homology"/>
<dbReference type="EC" id="5.3.1.16" evidence="1"/>
<dbReference type="EMBL" id="CP000826">
    <property type="protein sequence ID" value="ABV40715.1"/>
    <property type="molecule type" value="Genomic_DNA"/>
</dbReference>
<dbReference type="SMR" id="A8GC75"/>
<dbReference type="STRING" id="399741.Spro_1611"/>
<dbReference type="KEGG" id="spe:Spro_1611"/>
<dbReference type="eggNOG" id="COG0106">
    <property type="taxonomic scope" value="Bacteria"/>
</dbReference>
<dbReference type="HOGENOM" id="CLU_048577_1_2_6"/>
<dbReference type="OrthoDB" id="9807749at2"/>
<dbReference type="UniPathway" id="UPA00031">
    <property type="reaction ID" value="UER00009"/>
</dbReference>
<dbReference type="GO" id="GO:0005737">
    <property type="term" value="C:cytoplasm"/>
    <property type="evidence" value="ECO:0007669"/>
    <property type="project" value="UniProtKB-SubCell"/>
</dbReference>
<dbReference type="GO" id="GO:0003949">
    <property type="term" value="F:1-(5-phosphoribosyl)-5-[(5-phosphoribosylamino)methylideneamino]imidazole-4-carboxamide isomerase activity"/>
    <property type="evidence" value="ECO:0007669"/>
    <property type="project" value="UniProtKB-UniRule"/>
</dbReference>
<dbReference type="GO" id="GO:0000105">
    <property type="term" value="P:L-histidine biosynthetic process"/>
    <property type="evidence" value="ECO:0007669"/>
    <property type="project" value="UniProtKB-UniRule"/>
</dbReference>
<dbReference type="GO" id="GO:0000162">
    <property type="term" value="P:L-tryptophan biosynthetic process"/>
    <property type="evidence" value="ECO:0007669"/>
    <property type="project" value="TreeGrafter"/>
</dbReference>
<dbReference type="CDD" id="cd04732">
    <property type="entry name" value="HisA"/>
    <property type="match status" value="1"/>
</dbReference>
<dbReference type="FunFam" id="3.20.20.70:FF:000009">
    <property type="entry name" value="1-(5-phosphoribosyl)-5-[(5-phosphoribosylamino)methylideneamino] imidazole-4-carboxamide isomerase"/>
    <property type="match status" value="1"/>
</dbReference>
<dbReference type="Gene3D" id="3.20.20.70">
    <property type="entry name" value="Aldolase class I"/>
    <property type="match status" value="1"/>
</dbReference>
<dbReference type="HAMAP" id="MF_01014">
    <property type="entry name" value="HisA"/>
    <property type="match status" value="1"/>
</dbReference>
<dbReference type="InterPro" id="IPR013785">
    <property type="entry name" value="Aldolase_TIM"/>
</dbReference>
<dbReference type="InterPro" id="IPR006062">
    <property type="entry name" value="His_biosynth"/>
</dbReference>
<dbReference type="InterPro" id="IPR006063">
    <property type="entry name" value="HisA_bact_arch"/>
</dbReference>
<dbReference type="InterPro" id="IPR044524">
    <property type="entry name" value="Isoase_HisA-like"/>
</dbReference>
<dbReference type="InterPro" id="IPR023016">
    <property type="entry name" value="Isoase_HisA-like_bact"/>
</dbReference>
<dbReference type="InterPro" id="IPR011060">
    <property type="entry name" value="RibuloseP-bd_barrel"/>
</dbReference>
<dbReference type="NCBIfam" id="TIGR00007">
    <property type="entry name" value="1-(5-phosphoribosyl)-5-[(5-phosphoribosylamino)methylideneamino]imidazole-4-carboxamide isomerase"/>
    <property type="match status" value="1"/>
</dbReference>
<dbReference type="PANTHER" id="PTHR43090">
    <property type="entry name" value="1-(5-PHOSPHORIBOSYL)-5-[(5-PHOSPHORIBOSYLAMINO)METHYLIDENEAMINO] IMIDAZOLE-4-CARBOXAMIDE ISOMERASE"/>
    <property type="match status" value="1"/>
</dbReference>
<dbReference type="PANTHER" id="PTHR43090:SF2">
    <property type="entry name" value="1-(5-PHOSPHORIBOSYL)-5-[(5-PHOSPHORIBOSYLAMINO)METHYLIDENEAMINO] IMIDAZOLE-4-CARBOXAMIDE ISOMERASE"/>
    <property type="match status" value="1"/>
</dbReference>
<dbReference type="Pfam" id="PF00977">
    <property type="entry name" value="His_biosynth"/>
    <property type="match status" value="1"/>
</dbReference>
<dbReference type="SUPFAM" id="SSF51366">
    <property type="entry name" value="Ribulose-phoshate binding barrel"/>
    <property type="match status" value="1"/>
</dbReference>
<comment type="catalytic activity">
    <reaction evidence="1">
        <text>1-(5-phospho-beta-D-ribosyl)-5-[(5-phospho-beta-D-ribosylamino)methylideneamino]imidazole-4-carboxamide = 5-[(5-phospho-1-deoxy-D-ribulos-1-ylimino)methylamino]-1-(5-phospho-beta-D-ribosyl)imidazole-4-carboxamide</text>
        <dbReference type="Rhea" id="RHEA:15469"/>
        <dbReference type="ChEBI" id="CHEBI:58435"/>
        <dbReference type="ChEBI" id="CHEBI:58525"/>
        <dbReference type="EC" id="5.3.1.16"/>
    </reaction>
</comment>
<comment type="pathway">
    <text evidence="1">Amino-acid biosynthesis; L-histidine biosynthesis; L-histidine from 5-phospho-alpha-D-ribose 1-diphosphate: step 4/9.</text>
</comment>
<comment type="subcellular location">
    <subcellularLocation>
        <location evidence="1">Cytoplasm</location>
    </subcellularLocation>
</comment>
<comment type="similarity">
    <text evidence="1">Belongs to the HisA/HisF family.</text>
</comment>
<name>HIS4_SERP5</name>
<keyword id="KW-0028">Amino-acid biosynthesis</keyword>
<keyword id="KW-0963">Cytoplasm</keyword>
<keyword id="KW-0368">Histidine biosynthesis</keyword>
<keyword id="KW-0413">Isomerase</keyword>